<evidence type="ECO:0000250" key="1">
    <source>
        <dbReference type="UniProtKB" id="Q9HC35"/>
    </source>
</evidence>
<evidence type="ECO:0000256" key="2">
    <source>
        <dbReference type="SAM" id="MobiDB-lite"/>
    </source>
</evidence>
<evidence type="ECO:0000305" key="3"/>
<organism>
    <name type="scientific">Xenopus tropicalis</name>
    <name type="common">Western clawed frog</name>
    <name type="synonym">Silurana tropicalis</name>
    <dbReference type="NCBI Taxonomy" id="8364"/>
    <lineage>
        <taxon>Eukaryota</taxon>
        <taxon>Metazoa</taxon>
        <taxon>Chordata</taxon>
        <taxon>Craniata</taxon>
        <taxon>Vertebrata</taxon>
        <taxon>Euteleostomi</taxon>
        <taxon>Amphibia</taxon>
        <taxon>Batrachia</taxon>
        <taxon>Anura</taxon>
        <taxon>Pipoidea</taxon>
        <taxon>Pipidae</taxon>
        <taxon>Xenopodinae</taxon>
        <taxon>Xenopus</taxon>
        <taxon>Silurana</taxon>
    </lineage>
</organism>
<gene>
    <name type="primary">eml4</name>
</gene>
<protein>
    <recommendedName>
        <fullName>Echinoderm microtubule-associated protein-like 4</fullName>
        <shortName>EMAP-4</shortName>
    </recommendedName>
</protein>
<accession>Q6DIP5</accession>
<feature type="chain" id="PRO_0000284394" description="Echinoderm microtubule-associated protein-like 4">
    <location>
        <begin position="1"/>
        <end position="928"/>
    </location>
</feature>
<feature type="repeat" description="WD 1">
    <location>
        <begin position="199"/>
        <end position="237"/>
    </location>
</feature>
<feature type="repeat" description="WD 2">
    <location>
        <begin position="241"/>
        <end position="288"/>
    </location>
</feature>
<feature type="repeat" description="WD 3">
    <location>
        <begin position="296"/>
        <end position="336"/>
    </location>
</feature>
<feature type="repeat" description="WD 4">
    <location>
        <begin position="343"/>
        <end position="378"/>
    </location>
</feature>
<feature type="repeat" description="WD 5">
    <location>
        <begin position="385"/>
        <end position="424"/>
    </location>
</feature>
<feature type="repeat" description="WD 6">
    <location>
        <begin position="442"/>
        <end position="480"/>
    </location>
</feature>
<feature type="repeat" description="WD 7">
    <location>
        <begin position="485"/>
        <end position="521"/>
    </location>
</feature>
<feature type="repeat" description="WD 8">
    <location>
        <begin position="524"/>
        <end position="563"/>
    </location>
</feature>
<feature type="repeat" description="WD 9">
    <location>
        <begin position="567"/>
        <end position="604"/>
    </location>
</feature>
<feature type="repeat" description="WD 10">
    <location>
        <begin position="610"/>
        <end position="646"/>
    </location>
</feature>
<feature type="repeat" description="WD 11">
    <location>
        <begin position="653"/>
        <end position="692"/>
    </location>
</feature>
<feature type="repeat" description="WD 12">
    <location>
        <begin position="702"/>
        <end position="760"/>
    </location>
</feature>
<feature type="repeat" description="WD 13">
    <location>
        <begin position="767"/>
        <end position="806"/>
    </location>
</feature>
<feature type="region of interest" description="Microtubule-binding" evidence="1">
    <location>
        <begin position="1"/>
        <end position="189"/>
    </location>
</feature>
<feature type="region of interest" description="Disordered" evidence="2">
    <location>
        <begin position="107"/>
        <end position="131"/>
    </location>
</feature>
<feature type="region of interest" description="Disordered" evidence="2">
    <location>
        <begin position="821"/>
        <end position="928"/>
    </location>
</feature>
<feature type="coiled-coil region" evidence="1">
    <location>
        <begin position="14"/>
        <end position="63"/>
    </location>
</feature>
<feature type="compositionally biased region" description="Basic and acidic residues" evidence="2">
    <location>
        <begin position="116"/>
        <end position="131"/>
    </location>
</feature>
<feature type="compositionally biased region" description="Polar residues" evidence="2">
    <location>
        <begin position="836"/>
        <end position="845"/>
    </location>
</feature>
<feature type="compositionally biased region" description="Acidic residues" evidence="2">
    <location>
        <begin position="867"/>
        <end position="876"/>
    </location>
</feature>
<feature type="compositionally biased region" description="Polar residues" evidence="2">
    <location>
        <begin position="877"/>
        <end position="898"/>
    </location>
</feature>
<keyword id="KW-0131">Cell cycle</keyword>
<keyword id="KW-0132">Cell division</keyword>
<keyword id="KW-0175">Coiled coil</keyword>
<keyword id="KW-0963">Cytoplasm</keyword>
<keyword id="KW-0206">Cytoskeleton</keyword>
<keyword id="KW-0493">Microtubule</keyword>
<keyword id="KW-0498">Mitosis</keyword>
<keyword id="KW-1185">Reference proteome</keyword>
<keyword id="KW-0677">Repeat</keyword>
<keyword id="KW-0853">WD repeat</keyword>
<sequence>MDGFAGSLDDSVSAASTSDVQDRLSALELRVQQQEDEITVLKAALADVLRRLAISEDQVATVRKAVPSKGPATMREALSMSCITNGGAGTRKPSHITSVAKKDTLSSAAKSVKRSSTIEKSHNSWDASEESRNKLMRAASTSKLTSKVAKATDKHKDIVISPEGEYIKMFMRGRPITMFIPSDVENYDDIRTELPPEKLKLEWVFGYRGRDCRANVYLLPTGEIVYFIASVVVLFNYEERTQRHYLGHTDCVKCIAVHPDKIRIATGQIAGVDKDGRPLQPHVRVWDSVSLSTLQVIGLGTFERGVGCLAFSKADSGVHLSVIDDSNEHMLTVWDWQKKSKIAEIKTTNEVVLTVEFHPTDACTIVTCGKSHIFFWTWSGNSLARKQGIFGKYEKPKFVQCLAFLANGDVLAGDSGGVMLIWSKTTVESTASKGAKVLGVYQISRQIKAHDGSVFTLCQMRNGMLLTGGGKDRKVIMWDHDLNPEREIEVPDQYGTIRAVAEGKGDQFLIGTSRNFILRGTFNDGFQVEVQGHTDELWGLATHPFKDLLLTCAQDKQVCLWNSVDHSLEWTRVLDEPGHCADFHPTGTVVAIGTHSGRWFVLDAETRDLVSIHTDGNEQLSVMRYSVDGALLAVGSHDNFIYLYNVSENGRKYSRYGKCTGHSSYITHLDWSPDNQYIMSNSGDYEILYWDIPSGCKLIRNRSDCKDINWATYTCVLGFQVFGVWPEGSDGTDINALVRSHNRKVIALADDFCKVHLFQYPCSKPKAPSHKYSAHSSHVTNVSFTHKDSHLISTGGKDMSIMQWRLIEKVSHSQNDNIVESSSAVNSPVVTEKPLQPNTPTNLPQAVNEVPKEDDKTPAESPVPAEDALEQPEELNEVQSEKCSSQPEGANGQEPSNEVSEDPTDSAAINNTPEDAQDENQDDSSPLS</sequence>
<name>EMAL4_XENTR</name>
<comment type="function">
    <text evidence="1">Essential for the formation and stability of microtubules (MTs) (By similarity). Required for the organization of the mitotic spindle and for the proper attachment of kinetochores to MTs (By similarity). Promotes the recruitment of NUDC to the mitotic spindle for mitotic progression (By similarity).</text>
</comment>
<comment type="subunit">
    <text evidence="1">Homotrimer; self-association is mediated by the N-terminal coiled coil.</text>
</comment>
<comment type="subcellular location">
    <subcellularLocation>
        <location evidence="3">Cytoplasm</location>
        <location evidence="3">Cytoskeleton</location>
    </subcellularLocation>
    <subcellularLocation>
        <location evidence="1">Cytoplasm</location>
        <location evidence="1">Cytoskeleton</location>
        <location evidence="1">Spindle</location>
    </subcellularLocation>
    <subcellularLocation>
        <location evidence="1">Cytoplasm</location>
    </subcellularLocation>
    <subcellularLocation>
        <location evidence="1">Cytoplasm</location>
        <location evidence="1">Cytoskeleton</location>
        <location evidence="1">Microtubule organizing center</location>
    </subcellularLocation>
    <subcellularLocation>
        <location evidence="1">Midbody</location>
    </subcellularLocation>
    <text evidence="1">Localizes to microtubules (MTs) during interphase with a significantly reduced affinity for MTs during mitosis.</text>
</comment>
<comment type="similarity">
    <text evidence="3">Belongs to the WD repeat EMAP family.</text>
</comment>
<reference key="1">
    <citation type="submission" date="2004-06" db="EMBL/GenBank/DDBJ databases">
        <authorList>
            <consortium name="NIH - Xenopus Gene Collection (XGC) project"/>
        </authorList>
    </citation>
    <scope>NUCLEOTIDE SEQUENCE [LARGE SCALE MRNA]</scope>
    <source>
        <tissue>Embryo</tissue>
    </source>
</reference>
<proteinExistence type="evidence at transcript level"/>
<dbReference type="EMBL" id="BC075490">
    <property type="protein sequence ID" value="AAH75490.1"/>
    <property type="molecule type" value="mRNA"/>
</dbReference>
<dbReference type="RefSeq" id="NP_001006917.1">
    <property type="nucleotide sequence ID" value="NM_001006916.1"/>
</dbReference>
<dbReference type="SMR" id="Q6DIP5"/>
<dbReference type="FunCoup" id="Q6DIP5">
    <property type="interactions" value="956"/>
</dbReference>
<dbReference type="STRING" id="8364.ENSXETP00000001831"/>
<dbReference type="PaxDb" id="8364-ENSXETP00000058702"/>
<dbReference type="DNASU" id="448764"/>
<dbReference type="GeneID" id="448764"/>
<dbReference type="KEGG" id="xtr:448764"/>
<dbReference type="AGR" id="Xenbase:XB-GENE-971027"/>
<dbReference type="CTD" id="27436"/>
<dbReference type="Xenbase" id="XB-GENE-971027">
    <property type="gene designation" value="eml4"/>
</dbReference>
<dbReference type="eggNOG" id="KOG2106">
    <property type="taxonomic scope" value="Eukaryota"/>
</dbReference>
<dbReference type="HOGENOM" id="CLU_011754_0_1_1"/>
<dbReference type="InParanoid" id="Q6DIP5"/>
<dbReference type="OrthoDB" id="47802at2759"/>
<dbReference type="Reactome" id="R-XTR-9648025">
    <property type="pathway name" value="EML4 and NUDC in mitotic spindle formation"/>
</dbReference>
<dbReference type="Proteomes" id="UP000008143">
    <property type="component" value="Chromosome 5"/>
</dbReference>
<dbReference type="GO" id="GO:0005737">
    <property type="term" value="C:cytoplasm"/>
    <property type="evidence" value="ECO:0000250"/>
    <property type="project" value="UniProtKB"/>
</dbReference>
<dbReference type="GO" id="GO:0005874">
    <property type="term" value="C:microtubule"/>
    <property type="evidence" value="ECO:0000250"/>
    <property type="project" value="UniProtKB"/>
</dbReference>
<dbReference type="GO" id="GO:0005815">
    <property type="term" value="C:microtubule organizing center"/>
    <property type="evidence" value="ECO:0000250"/>
    <property type="project" value="UniProtKB"/>
</dbReference>
<dbReference type="GO" id="GO:0030496">
    <property type="term" value="C:midbody"/>
    <property type="evidence" value="ECO:0000250"/>
    <property type="project" value="UniProtKB"/>
</dbReference>
<dbReference type="GO" id="GO:0072686">
    <property type="term" value="C:mitotic spindle"/>
    <property type="evidence" value="ECO:0000250"/>
    <property type="project" value="UniProtKB"/>
</dbReference>
<dbReference type="GO" id="GO:0008608">
    <property type="term" value="P:attachment of spindle microtubules to kinetochore"/>
    <property type="evidence" value="ECO:0000250"/>
    <property type="project" value="UniProtKB"/>
</dbReference>
<dbReference type="GO" id="GO:0051301">
    <property type="term" value="P:cell division"/>
    <property type="evidence" value="ECO:0007669"/>
    <property type="project" value="UniProtKB-KW"/>
</dbReference>
<dbReference type="GO" id="GO:0007080">
    <property type="term" value="P:mitotic metaphase chromosome alignment"/>
    <property type="evidence" value="ECO:0000250"/>
    <property type="project" value="UniProtKB"/>
</dbReference>
<dbReference type="CDD" id="cd21950">
    <property type="entry name" value="TD_EMAP4"/>
    <property type="match status" value="1"/>
</dbReference>
<dbReference type="FunFam" id="2.130.10.10:FF:000019">
    <property type="entry name" value="echinoderm microtubule-associated protein-like 4 isoform X2"/>
    <property type="match status" value="1"/>
</dbReference>
<dbReference type="FunFam" id="2.130.10.10:FF:000005">
    <property type="entry name" value="Putative echinoderm microtubule-associated protein-like 1"/>
    <property type="match status" value="1"/>
</dbReference>
<dbReference type="Gene3D" id="2.130.10.10">
    <property type="entry name" value="YVTN repeat-like/Quinoprotein amine dehydrogenase"/>
    <property type="match status" value="2"/>
</dbReference>
<dbReference type="InterPro" id="IPR055442">
    <property type="entry name" value="Beta-prop_EML-like_2nd"/>
</dbReference>
<dbReference type="InterPro" id="IPR055439">
    <property type="entry name" value="Beta-prop_EML_1st"/>
</dbReference>
<dbReference type="InterPro" id="IPR005108">
    <property type="entry name" value="HELP"/>
</dbReference>
<dbReference type="InterPro" id="IPR011047">
    <property type="entry name" value="Quinoprotein_ADH-like_sf"/>
</dbReference>
<dbReference type="InterPro" id="IPR015943">
    <property type="entry name" value="WD40/YVTN_repeat-like_dom_sf"/>
</dbReference>
<dbReference type="InterPro" id="IPR001680">
    <property type="entry name" value="WD40_rpt"/>
</dbReference>
<dbReference type="InterPro" id="IPR050630">
    <property type="entry name" value="WD_repeat_EMAP"/>
</dbReference>
<dbReference type="PANTHER" id="PTHR13720:SF11">
    <property type="entry name" value="ECHINODERM MICROTUBULE-ASSOCIATED PROTEIN-LIKE 4"/>
    <property type="match status" value="1"/>
</dbReference>
<dbReference type="PANTHER" id="PTHR13720">
    <property type="entry name" value="WD-40 REPEAT PROTEIN"/>
    <property type="match status" value="1"/>
</dbReference>
<dbReference type="Pfam" id="PF23409">
    <property type="entry name" value="Beta-prop_EML"/>
    <property type="match status" value="1"/>
</dbReference>
<dbReference type="Pfam" id="PF23414">
    <property type="entry name" value="Beta-prop_EML_2"/>
    <property type="match status" value="1"/>
</dbReference>
<dbReference type="Pfam" id="PF03451">
    <property type="entry name" value="HELP"/>
    <property type="match status" value="1"/>
</dbReference>
<dbReference type="SMART" id="SM00320">
    <property type="entry name" value="WD40"/>
    <property type="match status" value="9"/>
</dbReference>
<dbReference type="SUPFAM" id="SSF50998">
    <property type="entry name" value="Quinoprotein alcohol dehydrogenase-like"/>
    <property type="match status" value="2"/>
</dbReference>
<dbReference type="PROSITE" id="PS00678">
    <property type="entry name" value="WD_REPEATS_1"/>
    <property type="match status" value="1"/>
</dbReference>
<dbReference type="PROSITE" id="PS50082">
    <property type="entry name" value="WD_REPEATS_2"/>
    <property type="match status" value="4"/>
</dbReference>
<dbReference type="PROSITE" id="PS50294">
    <property type="entry name" value="WD_REPEATS_REGION"/>
    <property type="match status" value="3"/>
</dbReference>